<comment type="function">
    <text evidence="4">DNA-dependent ATPase and 5'-3' DNA helicase that efficiently unwinds G-quadruplex (G4) DNA structures. May be involved in resolving commom issues that arise during DNA replication, recombination, and repair.</text>
</comment>
<comment type="catalytic activity">
    <reaction evidence="4">
        <text>Couples ATP hydrolysis with the unwinding of duplex DNA at the replication fork by translocating in the 5'-3' direction. This creates two antiparallel DNA single strands (ssDNA). The leading ssDNA polymer is the template for DNA polymerase III holoenzyme which synthesizes a continuous strand.</text>
        <dbReference type="EC" id="5.6.2.3"/>
    </reaction>
</comment>
<comment type="catalytic activity">
    <reaction evidence="4">
        <text>ATP + H2O = ADP + phosphate + H(+)</text>
        <dbReference type="Rhea" id="RHEA:13065"/>
        <dbReference type="ChEBI" id="CHEBI:15377"/>
        <dbReference type="ChEBI" id="CHEBI:15378"/>
        <dbReference type="ChEBI" id="CHEBI:30616"/>
        <dbReference type="ChEBI" id="CHEBI:43474"/>
        <dbReference type="ChEBI" id="CHEBI:456216"/>
        <dbReference type="EC" id="5.6.2.3"/>
    </reaction>
</comment>
<comment type="cofactor">
    <cofactor evidence="2">
        <name>Mg(2+)</name>
        <dbReference type="ChEBI" id="CHEBI:18420"/>
    </cofactor>
</comment>
<comment type="subunit">
    <text evidence="1 3">Monomer.</text>
</comment>
<comment type="similarity">
    <text evidence="5">Belongs to the helicase family. PIF1 subfamily.</text>
</comment>
<name>PIF1_CAMJE</name>
<evidence type="ECO:0000250" key="1"/>
<evidence type="ECO:0000250" key="2">
    <source>
        <dbReference type="UniProtKB" id="P07271"/>
    </source>
</evidence>
<evidence type="ECO:0000250" key="3">
    <source>
        <dbReference type="UniProtKB" id="Q9H611"/>
    </source>
</evidence>
<evidence type="ECO:0000269" key="4">
    <source>
    </source>
</evidence>
<evidence type="ECO:0000305" key="5"/>
<keyword id="KW-0067">ATP-binding</keyword>
<keyword id="KW-0227">DNA damage</keyword>
<keyword id="KW-0233">DNA recombination</keyword>
<keyword id="KW-0234">DNA repair</keyword>
<keyword id="KW-0238">DNA-binding</keyword>
<keyword id="KW-0347">Helicase</keyword>
<keyword id="KW-0378">Hydrolase</keyword>
<keyword id="KW-0413">Isomerase</keyword>
<keyword id="KW-0547">Nucleotide-binding</keyword>
<keyword id="KW-1185">Reference proteome</keyword>
<dbReference type="EC" id="5.6.2.3" evidence="4"/>
<dbReference type="EMBL" id="AL111168">
    <property type="protein sequence ID" value="CAL35065.1"/>
    <property type="molecule type" value="Genomic_DNA"/>
</dbReference>
<dbReference type="PIR" id="H81368">
    <property type="entry name" value="H81368"/>
</dbReference>
<dbReference type="RefSeq" id="WP_002853306.1">
    <property type="nucleotide sequence ID" value="NZ_SZUC01000001.1"/>
</dbReference>
<dbReference type="RefSeq" id="YP_002344343.1">
    <property type="nucleotide sequence ID" value="NC_002163.1"/>
</dbReference>
<dbReference type="SMR" id="Q0P9V4"/>
<dbReference type="STRING" id="192222.Cj0945c"/>
<dbReference type="PaxDb" id="192222-Cj0945c"/>
<dbReference type="EnsemblBacteria" id="CAL35065">
    <property type="protein sequence ID" value="CAL35065"/>
    <property type="gene ID" value="Cj0945c"/>
</dbReference>
<dbReference type="GeneID" id="905207"/>
<dbReference type="KEGG" id="cje:Cj0945c"/>
<dbReference type="PATRIC" id="fig|192222.6.peg.929"/>
<dbReference type="eggNOG" id="COG0507">
    <property type="taxonomic scope" value="Bacteria"/>
</dbReference>
<dbReference type="HOGENOM" id="CLU_001613_7_2_7"/>
<dbReference type="OrthoDB" id="9763659at2"/>
<dbReference type="Proteomes" id="UP000000799">
    <property type="component" value="Chromosome"/>
</dbReference>
<dbReference type="GO" id="GO:0005524">
    <property type="term" value="F:ATP binding"/>
    <property type="evidence" value="ECO:0007669"/>
    <property type="project" value="UniProtKB-KW"/>
</dbReference>
<dbReference type="GO" id="GO:0016887">
    <property type="term" value="F:ATP hydrolysis activity"/>
    <property type="evidence" value="ECO:0007669"/>
    <property type="project" value="InterPro"/>
</dbReference>
<dbReference type="GO" id="GO:0003677">
    <property type="term" value="F:DNA binding"/>
    <property type="evidence" value="ECO:0007669"/>
    <property type="project" value="UniProtKB-KW"/>
</dbReference>
<dbReference type="GO" id="GO:0003678">
    <property type="term" value="F:DNA helicase activity"/>
    <property type="evidence" value="ECO:0007669"/>
    <property type="project" value="InterPro"/>
</dbReference>
<dbReference type="GO" id="GO:0006310">
    <property type="term" value="P:DNA recombination"/>
    <property type="evidence" value="ECO:0007669"/>
    <property type="project" value="UniProtKB-KW"/>
</dbReference>
<dbReference type="GO" id="GO:0006281">
    <property type="term" value="P:DNA repair"/>
    <property type="evidence" value="ECO:0007669"/>
    <property type="project" value="UniProtKB-KW"/>
</dbReference>
<dbReference type="GO" id="GO:0000723">
    <property type="term" value="P:telomere maintenance"/>
    <property type="evidence" value="ECO:0007669"/>
    <property type="project" value="InterPro"/>
</dbReference>
<dbReference type="CDD" id="cd18809">
    <property type="entry name" value="SF1_C_RecD"/>
    <property type="match status" value="1"/>
</dbReference>
<dbReference type="Gene3D" id="2.30.30.940">
    <property type="match status" value="1"/>
</dbReference>
<dbReference type="Gene3D" id="3.40.50.300">
    <property type="entry name" value="P-loop containing nucleotide triphosphate hydrolases"/>
    <property type="match status" value="2"/>
</dbReference>
<dbReference type="InterPro" id="IPR003593">
    <property type="entry name" value="AAA+_ATPase"/>
</dbReference>
<dbReference type="InterPro" id="IPR003840">
    <property type="entry name" value="DNA_helicase_dom"/>
</dbReference>
<dbReference type="InterPro" id="IPR010285">
    <property type="entry name" value="DNA_helicase_pif1-like_DEAD"/>
</dbReference>
<dbReference type="InterPro" id="IPR027417">
    <property type="entry name" value="P-loop_NTPase"/>
</dbReference>
<dbReference type="InterPro" id="IPR051055">
    <property type="entry name" value="PIF1_helicase"/>
</dbReference>
<dbReference type="PANTHER" id="PTHR47642">
    <property type="entry name" value="ATP-DEPENDENT DNA HELICASE"/>
    <property type="match status" value="1"/>
</dbReference>
<dbReference type="Pfam" id="PF02689">
    <property type="entry name" value="Herpes_Helicase"/>
    <property type="match status" value="1"/>
</dbReference>
<dbReference type="Pfam" id="PF05970">
    <property type="entry name" value="PIF1"/>
    <property type="match status" value="1"/>
</dbReference>
<dbReference type="SMART" id="SM00382">
    <property type="entry name" value="AAA"/>
    <property type="match status" value="1"/>
</dbReference>
<dbReference type="SUPFAM" id="SSF52540">
    <property type="entry name" value="P-loop containing nucleoside triphosphate hydrolases"/>
    <property type="match status" value="2"/>
</dbReference>
<feature type="chain" id="PRO_0000423711" description="ATP-dependent DNA helicase Pif1">
    <location>
        <begin position="1"/>
        <end position="447"/>
    </location>
</feature>
<gene>
    <name type="primary">pif1</name>
    <name type="ordered locus">Cj0945c</name>
</gene>
<accession>Q0P9V4</accession>
<organism>
    <name type="scientific">Campylobacter jejuni subsp. jejuni serotype O:2 (strain ATCC 700819 / NCTC 11168)</name>
    <dbReference type="NCBI Taxonomy" id="192222"/>
    <lineage>
        <taxon>Bacteria</taxon>
        <taxon>Pseudomonadati</taxon>
        <taxon>Campylobacterota</taxon>
        <taxon>Epsilonproteobacteria</taxon>
        <taxon>Campylobacterales</taxon>
        <taxon>Campylobacteraceae</taxon>
        <taxon>Campylobacter</taxon>
    </lineage>
</organism>
<sequence length="447" mass="51967">MFDKLEKILAYDNVFLSGGAGVGKSFLTNELIKSYRKQKKLAIALGSSALSAFNIGGVTLHSFFCLGYCDDMMKLSVLDRNQKQKEKLTKLKELLKTIELIIIDEISMVSANVFEMIGFRLKNSQFNGKILVVGDFFQLPPVIKEKKETLFNHSYYAFSSFFWQDLNFKNIKLSQPKRTQNMEFYNHLSLIRQGFLDEKILSFFESLRIDYKELENLEDDYTLLCGINKKVNNINQEKLSKLETPLVCFKAQVKKEDKRIKDEELDSWIRSLNILEELNIKIGARIIFCVNNWDKNYYNGEQGIIEDILYEEEKIYISIIKNNGMKILLEPYTFFMEELEQSGKDFVVNILASVTQFPIKLAYAITIHKSQGMSIEKLVCDIDHIFENGQLYVALSRATNPNTLKIYSTKKINFGFYFANILKIDSNVIEFYKKHNFLDLEIQEQII</sequence>
<proteinExistence type="evidence at protein level"/>
<reference key="1">
    <citation type="journal article" date="2000" name="Nature">
        <title>The genome sequence of the food-borne pathogen Campylobacter jejuni reveals hypervariable sequences.</title>
        <authorList>
            <person name="Parkhill J."/>
            <person name="Wren B.W."/>
            <person name="Mungall K.L."/>
            <person name="Ketley J.M."/>
            <person name="Churcher C.M."/>
            <person name="Basham D."/>
            <person name="Chillingworth T."/>
            <person name="Davies R.M."/>
            <person name="Feltwell T."/>
            <person name="Holroyd S."/>
            <person name="Jagels K."/>
            <person name="Karlyshev A.V."/>
            <person name="Moule S."/>
            <person name="Pallen M.J."/>
            <person name="Penn C.W."/>
            <person name="Quail M.A."/>
            <person name="Rajandream M.A."/>
            <person name="Rutherford K.M."/>
            <person name="van Vliet A.H.M."/>
            <person name="Whitehead S."/>
            <person name="Barrell B.G."/>
        </authorList>
    </citation>
    <scope>NUCLEOTIDE SEQUENCE [LARGE SCALE GENOMIC DNA]</scope>
    <source>
        <strain>ATCC 700819 / NCTC 11168</strain>
    </source>
</reference>
<reference key="2">
    <citation type="journal article" date="2013" name="Nature">
        <title>Pif1 family helicases suppress genome instability at G-quadruplex motifs.</title>
        <authorList>
            <person name="Paeschke K."/>
            <person name="Bochman M.L."/>
            <person name="Garcia P.D."/>
            <person name="Cejka P."/>
            <person name="Friedman K.L."/>
            <person name="Kowalczykowski S.C."/>
            <person name="Zakian V.A."/>
        </authorList>
    </citation>
    <scope>FUNCTION IN G4-UNWINDING</scope>
    <scope>CATALYTIC ACTIVITY</scope>
    <source>
        <strain>ATCC 700819 / NCTC 11168</strain>
    </source>
</reference>
<protein>
    <recommendedName>
        <fullName>ATP-dependent DNA helicase Pif1</fullName>
        <ecNumber evidence="4">5.6.2.3</ecNumber>
    </recommendedName>
    <alternativeName>
        <fullName evidence="5">DNA 5'-3' helicase Pif1</fullName>
    </alternativeName>
</protein>